<reference key="1">
    <citation type="journal article" date="1985" name="J. Bacteriol.">
        <title>Physical and genetic map of a Rhizobium meliloti nodulation gene region and nucleotide sequence of nodC.</title>
        <authorList>
            <person name="Jacobs T.W."/>
            <person name="Egelhoff T.T."/>
            <person name="Long S.R."/>
        </authorList>
    </citation>
    <scope>NUCLEOTIDE SEQUENCE [GENOMIC DNA]</scope>
    <source>
        <strain>1021</strain>
    </source>
</reference>
<reference key="2">
    <citation type="journal article" date="1984" name="Nucleic Acids Res.">
        <title>Nucleotide sequence of Rhizobium meliloti nodulation genes.</title>
        <authorList>
            <person name="Toeroek I."/>
            <person name="Kondorosi E."/>
            <person name="Stepkowski T."/>
            <person name="Posfai J."/>
            <person name="Kondorosi A."/>
        </authorList>
    </citation>
    <scope>NUCLEOTIDE SEQUENCE [GENOMIC DNA]</scope>
    <source>
        <strain>41</strain>
    </source>
</reference>
<reference key="3">
    <citation type="journal article" date="2001" name="Proc. Natl. Acad. Sci. U.S.A.">
        <title>Nucleotide sequence and predicted functions of the entire Sinorhizobium meliloti pSymA megaplasmid.</title>
        <authorList>
            <person name="Barnett M.J."/>
            <person name="Fisher R.F."/>
            <person name="Jones T."/>
            <person name="Komp C."/>
            <person name="Abola A.P."/>
            <person name="Barloy-Hubler F."/>
            <person name="Bowser L."/>
            <person name="Capela D."/>
            <person name="Galibert F."/>
            <person name="Gouzy J."/>
            <person name="Gurjal M."/>
            <person name="Hong A."/>
            <person name="Huizar L."/>
            <person name="Hyman R.W."/>
            <person name="Kahn D."/>
            <person name="Kahn M.L."/>
            <person name="Kalman S."/>
            <person name="Keating D.H."/>
            <person name="Palm C."/>
            <person name="Peck M.C."/>
            <person name="Surzycki R."/>
            <person name="Wells D.H."/>
            <person name="Yeh K.-C."/>
            <person name="Davis R.W."/>
            <person name="Federspiel N.A."/>
            <person name="Long S.R."/>
        </authorList>
    </citation>
    <scope>NUCLEOTIDE SEQUENCE [LARGE SCALE GENOMIC DNA]</scope>
    <source>
        <strain>1021</strain>
    </source>
</reference>
<reference key="4">
    <citation type="journal article" date="2001" name="Science">
        <title>The composite genome of the legume symbiont Sinorhizobium meliloti.</title>
        <authorList>
            <person name="Galibert F."/>
            <person name="Finan T.M."/>
            <person name="Long S.R."/>
            <person name="Puehler A."/>
            <person name="Abola P."/>
            <person name="Ampe F."/>
            <person name="Barloy-Hubler F."/>
            <person name="Barnett M.J."/>
            <person name="Becker A."/>
            <person name="Boistard P."/>
            <person name="Bothe G."/>
            <person name="Boutry M."/>
            <person name="Bowser L."/>
            <person name="Buhrmester J."/>
            <person name="Cadieu E."/>
            <person name="Capela D."/>
            <person name="Chain P."/>
            <person name="Cowie A."/>
            <person name="Davis R.W."/>
            <person name="Dreano S."/>
            <person name="Federspiel N.A."/>
            <person name="Fisher R.F."/>
            <person name="Gloux S."/>
            <person name="Godrie T."/>
            <person name="Goffeau A."/>
            <person name="Golding B."/>
            <person name="Gouzy J."/>
            <person name="Gurjal M."/>
            <person name="Hernandez-Lucas I."/>
            <person name="Hong A."/>
            <person name="Huizar L."/>
            <person name="Hyman R.W."/>
            <person name="Jones T."/>
            <person name="Kahn D."/>
            <person name="Kahn M.L."/>
            <person name="Kalman S."/>
            <person name="Keating D.H."/>
            <person name="Kiss E."/>
            <person name="Komp C."/>
            <person name="Lelaure V."/>
            <person name="Masuy D."/>
            <person name="Palm C."/>
            <person name="Peck M.C."/>
            <person name="Pohl T.M."/>
            <person name="Portetelle D."/>
            <person name="Purnelle B."/>
            <person name="Ramsperger U."/>
            <person name="Surzycki R."/>
            <person name="Thebault P."/>
            <person name="Vandenbol M."/>
            <person name="Vorhoelter F.J."/>
            <person name="Weidner S."/>
            <person name="Wells D.H."/>
            <person name="Wong K."/>
            <person name="Yeh K.-C."/>
            <person name="Batut J."/>
        </authorList>
    </citation>
    <scope>NUCLEOTIDE SEQUENCE [LARGE SCALE GENOMIC DNA]</scope>
    <source>
        <strain>1021</strain>
    </source>
</reference>
<organism>
    <name type="scientific">Rhizobium meliloti (strain 1021)</name>
    <name type="common">Ensifer meliloti</name>
    <name type="synonym">Sinorhizobium meliloti</name>
    <dbReference type="NCBI Taxonomy" id="266834"/>
    <lineage>
        <taxon>Bacteria</taxon>
        <taxon>Pseudomonadati</taxon>
        <taxon>Pseudomonadota</taxon>
        <taxon>Alphaproteobacteria</taxon>
        <taxon>Hyphomicrobiales</taxon>
        <taxon>Rhizobiaceae</taxon>
        <taxon>Sinorhizobium/Ensifer group</taxon>
        <taxon>Sinorhizobium</taxon>
    </lineage>
</organism>
<dbReference type="EC" id="2.4.1.-"/>
<dbReference type="EMBL" id="X01649">
    <property type="protein sequence ID" value="CAA25810.1"/>
    <property type="molecule type" value="Genomic_DNA"/>
</dbReference>
<dbReference type="EMBL" id="M11268">
    <property type="protein sequence ID" value="AAA98362.1"/>
    <property type="molecule type" value="Genomic_DNA"/>
</dbReference>
<dbReference type="EMBL" id="AE006469">
    <property type="protein sequence ID" value="AAK65131.1"/>
    <property type="molecule type" value="Genomic_DNA"/>
</dbReference>
<dbReference type="PIR" id="A03487">
    <property type="entry name" value="ZZZRC4"/>
</dbReference>
<dbReference type="PIR" id="A95321">
    <property type="entry name" value="A95321"/>
</dbReference>
<dbReference type="RefSeq" id="NP_435719.1">
    <property type="nucleotide sequence ID" value="NC_003037.1"/>
</dbReference>
<dbReference type="RefSeq" id="WP_010967454.1">
    <property type="nucleotide sequence ID" value="NC_003037.1"/>
</dbReference>
<dbReference type="SMR" id="P04341"/>
<dbReference type="CAZy" id="GT2">
    <property type="family name" value="Glycosyltransferase Family 2"/>
</dbReference>
<dbReference type="EnsemblBacteria" id="AAK65131">
    <property type="protein sequence ID" value="AAK65131"/>
    <property type="gene ID" value="SMa0866"/>
</dbReference>
<dbReference type="KEGG" id="sme:SMa0866"/>
<dbReference type="PATRIC" id="fig|266834.11.peg.484"/>
<dbReference type="HOGENOM" id="CLU_029695_4_2_5"/>
<dbReference type="OrthoDB" id="276604at2"/>
<dbReference type="Proteomes" id="UP000001976">
    <property type="component" value="Plasmid pSymA"/>
</dbReference>
<dbReference type="GO" id="GO:0005886">
    <property type="term" value="C:plasma membrane"/>
    <property type="evidence" value="ECO:0007669"/>
    <property type="project" value="UniProtKB-SubCell"/>
</dbReference>
<dbReference type="GO" id="GO:0050501">
    <property type="term" value="F:hyaluronan synthase activity"/>
    <property type="evidence" value="ECO:0007669"/>
    <property type="project" value="TreeGrafter"/>
</dbReference>
<dbReference type="GO" id="GO:0085029">
    <property type="term" value="P:extracellular matrix assembly"/>
    <property type="evidence" value="ECO:0007669"/>
    <property type="project" value="TreeGrafter"/>
</dbReference>
<dbReference type="GO" id="GO:0030213">
    <property type="term" value="P:hyaluronan biosynthetic process"/>
    <property type="evidence" value="ECO:0007669"/>
    <property type="project" value="TreeGrafter"/>
</dbReference>
<dbReference type="CDD" id="cd06423">
    <property type="entry name" value="CESA_like"/>
    <property type="match status" value="1"/>
</dbReference>
<dbReference type="Gene3D" id="3.90.550.10">
    <property type="entry name" value="Spore Coat Polysaccharide Biosynthesis Protein SpsA, Chain A"/>
    <property type="match status" value="1"/>
</dbReference>
<dbReference type="InterPro" id="IPR026463">
    <property type="entry name" value="Chitooligosach_Synthase_NodC"/>
</dbReference>
<dbReference type="InterPro" id="IPR001173">
    <property type="entry name" value="Glyco_trans_2-like"/>
</dbReference>
<dbReference type="InterPro" id="IPR029044">
    <property type="entry name" value="Nucleotide-diphossugar_trans"/>
</dbReference>
<dbReference type="NCBIfam" id="TIGR04242">
    <property type="entry name" value="nodulat_NodC"/>
    <property type="match status" value="1"/>
</dbReference>
<dbReference type="PANTHER" id="PTHR22913">
    <property type="entry name" value="HYALURONAN SYNTHASE"/>
    <property type="match status" value="1"/>
</dbReference>
<dbReference type="PANTHER" id="PTHR22913:SF12">
    <property type="entry name" value="MANNURONAN SYNTHASE"/>
    <property type="match status" value="1"/>
</dbReference>
<dbReference type="Pfam" id="PF00535">
    <property type="entry name" value="Glycos_transf_2"/>
    <property type="match status" value="1"/>
</dbReference>
<dbReference type="SUPFAM" id="SSF53448">
    <property type="entry name" value="Nucleotide-diphospho-sugar transferases"/>
    <property type="match status" value="1"/>
</dbReference>
<geneLocation type="plasmid">
    <name>pSymA</name>
    <name>megaplasmid 1</name>
</geneLocation>
<keyword id="KW-1003">Cell membrane</keyword>
<keyword id="KW-0328">Glycosyltransferase</keyword>
<keyword id="KW-0472">Membrane</keyword>
<keyword id="KW-0536">Nodulation</keyword>
<keyword id="KW-0614">Plasmid</keyword>
<keyword id="KW-1185">Reference proteome</keyword>
<keyword id="KW-0808">Transferase</keyword>
<sequence length="426" mass="46769">MYLLDTTSTAAISIYALLLTAYRSMQVLYARPIDGPAVAAEPVETRPLPAVDVIVPSFNEDPGILSACLASIADQDYPGELRVYVVDDGSRNREAIVRVRAFYSRDPRFSFILLPENVGKRKAQIAAIGQSSGDLVLNVDSDSTIAFDVVSKLASKMRDPEVGAVMGQLTASNSGDTWLTKLIDMEYWLACNEERAAQSRFGAVMCCCGPCAMYRRSALASLLDQYETQLFRGKPSDFGEDRHLTILMLKAGFRTEYVPDAIVATVVPDTLKPYLRQQLRWARSTFRDTFLALPLLRGLSPFLAFDAVGQNIGQLLLALSVVTGLAHLIMTATVPWWTILIIACMTIIRCSVVALHARQLRFLGFVLHTPINLFLILPLKAYALCTLSNSDWLSRYSAPEVPVSGGKQTPIQTSGRVTPDCTCSGE</sequence>
<gene>
    <name type="primary">nodC</name>
    <name type="ordered locus">RA0473</name>
    <name type="ORF">SMa0866</name>
</gene>
<proteinExistence type="inferred from homology"/>
<name>NODC_RHIME</name>
<evidence type="ECO:0000256" key="1">
    <source>
        <dbReference type="SAM" id="MobiDB-lite"/>
    </source>
</evidence>
<evidence type="ECO:0000305" key="2"/>
<accession>P04341</accession>
<comment type="function">
    <text>Involved in the synthesis of Nod factor, a sulfated N-acyl-beta-1,4-tetrasaccharide of N-acetylglucosamine which initiates a series of events in the host plant species leading eventually to nodulation.</text>
</comment>
<comment type="subcellular location">
    <subcellularLocation>
        <location evidence="2">Cell membrane</location>
        <topology evidence="2">Peripheral membrane protein</topology>
    </subcellularLocation>
</comment>
<comment type="similarity">
    <text evidence="2">Belongs to the NodC/HAS family.</text>
</comment>
<protein>
    <recommendedName>
        <fullName>N-acetylglucosaminyltransferase</fullName>
        <ecNumber>2.4.1.-</ecNumber>
    </recommendedName>
    <alternativeName>
        <fullName>Nodulation protein C</fullName>
    </alternativeName>
</protein>
<feature type="chain" id="PRO_0000197192" description="N-acetylglucosaminyltransferase">
    <location>
        <begin position="1"/>
        <end position="426"/>
    </location>
</feature>
<feature type="region of interest" description="Disordered" evidence="1">
    <location>
        <begin position="401"/>
        <end position="426"/>
    </location>
</feature>
<feature type="compositionally biased region" description="Polar residues" evidence="1">
    <location>
        <begin position="406"/>
        <end position="416"/>
    </location>
</feature>
<feature type="sequence variant" description="In strain: 41.">
    <original>A</original>
    <variation>S</variation>
    <location>
        <position position="39"/>
    </location>
</feature>
<feature type="sequence variant" description="In strain: 41.">
    <original>M</original>
    <variation>V</variation>
    <location>
        <position position="166"/>
    </location>
</feature>